<gene>
    <name evidence="1" type="primary">asnS</name>
    <name type="ordered locus">HSM_1223</name>
</gene>
<feature type="chain" id="PRO_1000081850" description="Asparagine--tRNA ligase">
    <location>
        <begin position="1"/>
        <end position="467"/>
    </location>
</feature>
<name>SYN_HISS2</name>
<accession>B0UTU8</accession>
<keyword id="KW-0030">Aminoacyl-tRNA synthetase</keyword>
<keyword id="KW-0067">ATP-binding</keyword>
<keyword id="KW-0963">Cytoplasm</keyword>
<keyword id="KW-0436">Ligase</keyword>
<keyword id="KW-0547">Nucleotide-binding</keyword>
<keyword id="KW-0648">Protein biosynthesis</keyword>
<protein>
    <recommendedName>
        <fullName evidence="1">Asparagine--tRNA ligase</fullName>
        <ecNumber evidence="1">6.1.1.22</ecNumber>
    </recommendedName>
    <alternativeName>
        <fullName evidence="1">Asparaginyl-tRNA synthetase</fullName>
        <shortName evidence="1">AsnRS</shortName>
    </alternativeName>
</protein>
<evidence type="ECO:0000255" key="1">
    <source>
        <dbReference type="HAMAP-Rule" id="MF_00534"/>
    </source>
</evidence>
<reference key="1">
    <citation type="submission" date="2008-02" db="EMBL/GenBank/DDBJ databases">
        <title>Complete sequence of Haemophilus somnus 2336.</title>
        <authorList>
            <consortium name="US DOE Joint Genome Institute"/>
            <person name="Siddaramappa S."/>
            <person name="Duncan A.J."/>
            <person name="Challacombe J.F."/>
            <person name="Rainey D."/>
            <person name="Gillaspy A.F."/>
            <person name="Carson M."/>
            <person name="Gipson J."/>
            <person name="Gipson M."/>
            <person name="Bruce D."/>
            <person name="Detter J.C."/>
            <person name="Han C.S."/>
            <person name="Land M."/>
            <person name="Tapia R."/>
            <person name="Thompson L.S."/>
            <person name="Orvis J."/>
            <person name="Zaitshik J."/>
            <person name="Barnes G."/>
            <person name="Brettin T.S."/>
            <person name="Dyer D.W."/>
            <person name="Inzana T.J."/>
        </authorList>
    </citation>
    <scope>NUCLEOTIDE SEQUENCE [LARGE SCALE GENOMIC DNA]</scope>
    <source>
        <strain>2336</strain>
    </source>
</reference>
<comment type="catalytic activity">
    <reaction evidence="1">
        <text>tRNA(Asn) + L-asparagine + ATP = L-asparaginyl-tRNA(Asn) + AMP + diphosphate + H(+)</text>
        <dbReference type="Rhea" id="RHEA:11180"/>
        <dbReference type="Rhea" id="RHEA-COMP:9659"/>
        <dbReference type="Rhea" id="RHEA-COMP:9674"/>
        <dbReference type="ChEBI" id="CHEBI:15378"/>
        <dbReference type="ChEBI" id="CHEBI:30616"/>
        <dbReference type="ChEBI" id="CHEBI:33019"/>
        <dbReference type="ChEBI" id="CHEBI:58048"/>
        <dbReference type="ChEBI" id="CHEBI:78442"/>
        <dbReference type="ChEBI" id="CHEBI:78515"/>
        <dbReference type="ChEBI" id="CHEBI:456215"/>
        <dbReference type="EC" id="6.1.1.22"/>
    </reaction>
</comment>
<comment type="subunit">
    <text evidence="1">Homodimer.</text>
</comment>
<comment type="subcellular location">
    <subcellularLocation>
        <location evidence="1">Cytoplasm</location>
    </subcellularLocation>
</comment>
<comment type="similarity">
    <text evidence="1">Belongs to the class-II aminoacyl-tRNA synthetase family.</text>
</comment>
<dbReference type="EC" id="6.1.1.22" evidence="1"/>
<dbReference type="EMBL" id="CP000947">
    <property type="protein sequence ID" value="ACA30949.1"/>
    <property type="molecule type" value="Genomic_DNA"/>
</dbReference>
<dbReference type="RefSeq" id="WP_012340395.1">
    <property type="nucleotide sequence ID" value="NC_010519.1"/>
</dbReference>
<dbReference type="SMR" id="B0UTU8"/>
<dbReference type="STRING" id="228400.HSM_1223"/>
<dbReference type="GeneID" id="31487526"/>
<dbReference type="KEGG" id="hsm:HSM_1223"/>
<dbReference type="HOGENOM" id="CLU_004553_2_0_6"/>
<dbReference type="GO" id="GO:0005737">
    <property type="term" value="C:cytoplasm"/>
    <property type="evidence" value="ECO:0007669"/>
    <property type="project" value="UniProtKB-SubCell"/>
</dbReference>
<dbReference type="GO" id="GO:0004816">
    <property type="term" value="F:asparagine-tRNA ligase activity"/>
    <property type="evidence" value="ECO:0007669"/>
    <property type="project" value="UniProtKB-UniRule"/>
</dbReference>
<dbReference type="GO" id="GO:0005524">
    <property type="term" value="F:ATP binding"/>
    <property type="evidence" value="ECO:0007669"/>
    <property type="project" value="UniProtKB-UniRule"/>
</dbReference>
<dbReference type="GO" id="GO:0003676">
    <property type="term" value="F:nucleic acid binding"/>
    <property type="evidence" value="ECO:0007669"/>
    <property type="project" value="InterPro"/>
</dbReference>
<dbReference type="GO" id="GO:0006421">
    <property type="term" value="P:asparaginyl-tRNA aminoacylation"/>
    <property type="evidence" value="ECO:0007669"/>
    <property type="project" value="UniProtKB-UniRule"/>
</dbReference>
<dbReference type="CDD" id="cd00776">
    <property type="entry name" value="AsxRS_core"/>
    <property type="match status" value="1"/>
</dbReference>
<dbReference type="CDD" id="cd04318">
    <property type="entry name" value="EcAsnRS_like_N"/>
    <property type="match status" value="1"/>
</dbReference>
<dbReference type="FunFam" id="3.30.930.10:FF:000016">
    <property type="entry name" value="Asparagine--tRNA ligase"/>
    <property type="match status" value="1"/>
</dbReference>
<dbReference type="Gene3D" id="3.30.930.10">
    <property type="entry name" value="Bira Bifunctional Protein, Domain 2"/>
    <property type="match status" value="1"/>
</dbReference>
<dbReference type="Gene3D" id="2.40.50.140">
    <property type="entry name" value="Nucleic acid-binding proteins"/>
    <property type="match status" value="1"/>
</dbReference>
<dbReference type="HAMAP" id="MF_00534">
    <property type="entry name" value="Asn_tRNA_synth"/>
    <property type="match status" value="1"/>
</dbReference>
<dbReference type="InterPro" id="IPR004364">
    <property type="entry name" value="Aa-tRNA-synt_II"/>
</dbReference>
<dbReference type="InterPro" id="IPR006195">
    <property type="entry name" value="aa-tRNA-synth_II"/>
</dbReference>
<dbReference type="InterPro" id="IPR045864">
    <property type="entry name" value="aa-tRNA-synth_II/BPL/LPL"/>
</dbReference>
<dbReference type="InterPro" id="IPR004522">
    <property type="entry name" value="Asn-tRNA-ligase"/>
</dbReference>
<dbReference type="InterPro" id="IPR002312">
    <property type="entry name" value="Asp/Asn-tRNA-synth_IIb"/>
</dbReference>
<dbReference type="InterPro" id="IPR012340">
    <property type="entry name" value="NA-bd_OB-fold"/>
</dbReference>
<dbReference type="InterPro" id="IPR004365">
    <property type="entry name" value="NA-bd_OB_tRNA"/>
</dbReference>
<dbReference type="NCBIfam" id="TIGR00457">
    <property type="entry name" value="asnS"/>
    <property type="match status" value="1"/>
</dbReference>
<dbReference type="NCBIfam" id="NF003037">
    <property type="entry name" value="PRK03932.1"/>
    <property type="match status" value="1"/>
</dbReference>
<dbReference type="PANTHER" id="PTHR22594:SF34">
    <property type="entry name" value="ASPARAGINE--TRNA LIGASE, MITOCHONDRIAL-RELATED"/>
    <property type="match status" value="1"/>
</dbReference>
<dbReference type="PANTHER" id="PTHR22594">
    <property type="entry name" value="ASPARTYL/LYSYL-TRNA SYNTHETASE"/>
    <property type="match status" value="1"/>
</dbReference>
<dbReference type="Pfam" id="PF00152">
    <property type="entry name" value="tRNA-synt_2"/>
    <property type="match status" value="1"/>
</dbReference>
<dbReference type="Pfam" id="PF01336">
    <property type="entry name" value="tRNA_anti-codon"/>
    <property type="match status" value="1"/>
</dbReference>
<dbReference type="PRINTS" id="PR01042">
    <property type="entry name" value="TRNASYNTHASP"/>
</dbReference>
<dbReference type="SUPFAM" id="SSF55681">
    <property type="entry name" value="Class II aaRS and biotin synthetases"/>
    <property type="match status" value="1"/>
</dbReference>
<dbReference type="SUPFAM" id="SSF50249">
    <property type="entry name" value="Nucleic acid-binding proteins"/>
    <property type="match status" value="1"/>
</dbReference>
<dbReference type="PROSITE" id="PS50862">
    <property type="entry name" value="AA_TRNA_LIGASE_II"/>
    <property type="match status" value="1"/>
</dbReference>
<proteinExistence type="inferred from homology"/>
<organism>
    <name type="scientific">Histophilus somni (strain 2336)</name>
    <name type="common">Haemophilus somnus</name>
    <dbReference type="NCBI Taxonomy" id="228400"/>
    <lineage>
        <taxon>Bacteria</taxon>
        <taxon>Pseudomonadati</taxon>
        <taxon>Pseudomonadota</taxon>
        <taxon>Gammaproteobacteria</taxon>
        <taxon>Pasteurellales</taxon>
        <taxon>Pasteurellaceae</taxon>
        <taxon>Histophilus</taxon>
    </lineage>
</organism>
<sequence>MTKIASVANILKGKITVGETVTVRGWIRTRRDSKAGLSFLAIYDGSCFDPIQAIVNNDIENYETEILRLTTGCSVVVTGKIVESPAEGQAVELQADKIEVSGWVDDPETYPMSAKRHSIEYLREVAHLRPRTNIIGAVARVRHCLAQAIHRFFHEQGFYWVATPLITASDTEGAGEMFRVSTLDLENLPRTDKGAVDFSQDFFGKESFLTVSGQLNGESYACALSKIYTFGPTFRAENSNTTRHLAEFWMVEPEIAFATLADNAKLAEDMLKYVFRAVLNEREDDLKFFEKHVDKNVITRLKDFINSDFAQIDYTDAIDILLKSGKAFEFPVSWGIDLSSEHERYLAEEYFKSPVVVKNYPKDIKAFYMRLNDDGKTVAAMDVLAPGIGEIIGGSQREERLEVLDKRIAEMGLKAEDYWWYRDLRRYGTVPHAGFGLGFERLIVYVTGVQNIRDVIPFPRTPRNANF</sequence>